<dbReference type="EMBL" id="CP000020">
    <property type="protein sequence ID" value="AAW86910.1"/>
    <property type="molecule type" value="Genomic_DNA"/>
</dbReference>
<dbReference type="RefSeq" id="WP_005421323.1">
    <property type="nucleotide sequence ID" value="NZ_CAWLES010000001.1"/>
</dbReference>
<dbReference type="RefSeq" id="YP_205798.1">
    <property type="nucleotide sequence ID" value="NC_006840.2"/>
</dbReference>
<dbReference type="SMR" id="Q5E236"/>
<dbReference type="STRING" id="312309.VF_2415"/>
<dbReference type="EnsemblBacteria" id="AAW86910">
    <property type="protein sequence ID" value="AAW86910"/>
    <property type="gene ID" value="VF_2415"/>
</dbReference>
<dbReference type="GeneID" id="54165130"/>
<dbReference type="KEGG" id="vfi:VF_2415"/>
<dbReference type="PATRIC" id="fig|312309.11.peg.2448"/>
<dbReference type="eggNOG" id="COG0222">
    <property type="taxonomic scope" value="Bacteria"/>
</dbReference>
<dbReference type="HOGENOM" id="CLU_086499_3_2_6"/>
<dbReference type="OrthoDB" id="9811748at2"/>
<dbReference type="Proteomes" id="UP000000537">
    <property type="component" value="Chromosome I"/>
</dbReference>
<dbReference type="GO" id="GO:0022625">
    <property type="term" value="C:cytosolic large ribosomal subunit"/>
    <property type="evidence" value="ECO:0007669"/>
    <property type="project" value="TreeGrafter"/>
</dbReference>
<dbReference type="GO" id="GO:0003729">
    <property type="term" value="F:mRNA binding"/>
    <property type="evidence" value="ECO:0007669"/>
    <property type="project" value="TreeGrafter"/>
</dbReference>
<dbReference type="GO" id="GO:0003735">
    <property type="term" value="F:structural constituent of ribosome"/>
    <property type="evidence" value="ECO:0007669"/>
    <property type="project" value="InterPro"/>
</dbReference>
<dbReference type="GO" id="GO:0006412">
    <property type="term" value="P:translation"/>
    <property type="evidence" value="ECO:0007669"/>
    <property type="project" value="UniProtKB-UniRule"/>
</dbReference>
<dbReference type="CDD" id="cd00387">
    <property type="entry name" value="Ribosomal_L7_L12"/>
    <property type="match status" value="1"/>
</dbReference>
<dbReference type="FunFam" id="1.20.5.710:FF:000001">
    <property type="entry name" value="50S ribosomal protein L7/L12"/>
    <property type="match status" value="1"/>
</dbReference>
<dbReference type="FunFam" id="3.30.1390.10:FF:000001">
    <property type="entry name" value="50S ribosomal protein L7/L12"/>
    <property type="match status" value="1"/>
</dbReference>
<dbReference type="Gene3D" id="3.30.1390.10">
    <property type="match status" value="1"/>
</dbReference>
<dbReference type="Gene3D" id="1.20.5.710">
    <property type="entry name" value="Single helix bin"/>
    <property type="match status" value="1"/>
</dbReference>
<dbReference type="HAMAP" id="MF_00368">
    <property type="entry name" value="Ribosomal_bL12"/>
    <property type="match status" value="1"/>
</dbReference>
<dbReference type="InterPro" id="IPR000206">
    <property type="entry name" value="Ribosomal_bL12"/>
</dbReference>
<dbReference type="InterPro" id="IPR013823">
    <property type="entry name" value="Ribosomal_bL12_C"/>
</dbReference>
<dbReference type="InterPro" id="IPR014719">
    <property type="entry name" value="Ribosomal_bL12_C/ClpS-like"/>
</dbReference>
<dbReference type="InterPro" id="IPR008932">
    <property type="entry name" value="Ribosomal_bL12_oligo"/>
</dbReference>
<dbReference type="InterPro" id="IPR036235">
    <property type="entry name" value="Ribosomal_bL12_oligo_N_sf"/>
</dbReference>
<dbReference type="NCBIfam" id="TIGR00855">
    <property type="entry name" value="L12"/>
    <property type="match status" value="1"/>
</dbReference>
<dbReference type="PANTHER" id="PTHR45987">
    <property type="entry name" value="39S RIBOSOMAL PROTEIN L12"/>
    <property type="match status" value="1"/>
</dbReference>
<dbReference type="PANTHER" id="PTHR45987:SF4">
    <property type="entry name" value="LARGE RIBOSOMAL SUBUNIT PROTEIN BL12M"/>
    <property type="match status" value="1"/>
</dbReference>
<dbReference type="Pfam" id="PF00542">
    <property type="entry name" value="Ribosomal_L12"/>
    <property type="match status" value="1"/>
</dbReference>
<dbReference type="Pfam" id="PF16320">
    <property type="entry name" value="Ribosomal_L12_N"/>
    <property type="match status" value="1"/>
</dbReference>
<dbReference type="SUPFAM" id="SSF54736">
    <property type="entry name" value="ClpS-like"/>
    <property type="match status" value="1"/>
</dbReference>
<dbReference type="SUPFAM" id="SSF48300">
    <property type="entry name" value="Ribosomal protein L7/12, oligomerisation (N-terminal) domain"/>
    <property type="match status" value="1"/>
</dbReference>
<keyword id="KW-1185">Reference proteome</keyword>
<keyword id="KW-0687">Ribonucleoprotein</keyword>
<keyword id="KW-0689">Ribosomal protein</keyword>
<organism>
    <name type="scientific">Aliivibrio fischeri (strain ATCC 700601 / ES114)</name>
    <name type="common">Vibrio fischeri</name>
    <dbReference type="NCBI Taxonomy" id="312309"/>
    <lineage>
        <taxon>Bacteria</taxon>
        <taxon>Pseudomonadati</taxon>
        <taxon>Pseudomonadota</taxon>
        <taxon>Gammaproteobacteria</taxon>
        <taxon>Vibrionales</taxon>
        <taxon>Vibrionaceae</taxon>
        <taxon>Aliivibrio</taxon>
    </lineage>
</organism>
<protein>
    <recommendedName>
        <fullName evidence="1">Large ribosomal subunit protein bL12</fullName>
    </recommendedName>
    <alternativeName>
        <fullName evidence="2">50S ribosomal protein L7/L12</fullName>
    </alternativeName>
</protein>
<evidence type="ECO:0000255" key="1">
    <source>
        <dbReference type="HAMAP-Rule" id="MF_00368"/>
    </source>
</evidence>
<evidence type="ECO:0000305" key="2"/>
<sequence>MSITNEQILDAVAEMSVMQVVELIEAMEEKFGVTAAAAVVAGGAAGGDAAEEQSEFDVILTSAGANKVAVIKAVRGATGLGLKEAKGLVDSAPAPLKEGVDKAEAEALKAQLEEAGASVEVK</sequence>
<comment type="function">
    <text evidence="1">Forms part of the ribosomal stalk which helps the ribosome interact with GTP-bound translation factors. Is thus essential for accurate translation.</text>
</comment>
<comment type="subunit">
    <text evidence="1">Homodimer. Part of the ribosomal stalk of the 50S ribosomal subunit. Forms a multimeric L10(L12)X complex, where L10 forms an elongated spine to which 2 to 4 L12 dimers bind in a sequential fashion. Binds GTP-bound translation factors.</text>
</comment>
<comment type="similarity">
    <text evidence="1">Belongs to the bacterial ribosomal protein bL12 family.</text>
</comment>
<name>RL7_ALIF1</name>
<proteinExistence type="inferred from homology"/>
<accession>Q5E236</accession>
<gene>
    <name evidence="1" type="primary">rplL</name>
    <name type="ordered locus">VF_2415</name>
</gene>
<reference key="1">
    <citation type="journal article" date="2005" name="Proc. Natl. Acad. Sci. U.S.A.">
        <title>Complete genome sequence of Vibrio fischeri: a symbiotic bacterium with pathogenic congeners.</title>
        <authorList>
            <person name="Ruby E.G."/>
            <person name="Urbanowski M."/>
            <person name="Campbell J."/>
            <person name="Dunn A."/>
            <person name="Faini M."/>
            <person name="Gunsalus R."/>
            <person name="Lostroh P."/>
            <person name="Lupp C."/>
            <person name="McCann J."/>
            <person name="Millikan D."/>
            <person name="Schaefer A."/>
            <person name="Stabb E."/>
            <person name="Stevens A."/>
            <person name="Visick K."/>
            <person name="Whistler C."/>
            <person name="Greenberg E.P."/>
        </authorList>
    </citation>
    <scope>NUCLEOTIDE SEQUENCE [LARGE SCALE GENOMIC DNA]</scope>
    <source>
        <strain>ATCC 700601 / ES114</strain>
    </source>
</reference>
<feature type="chain" id="PRO_0000243525" description="Large ribosomal subunit protein bL12">
    <location>
        <begin position="1"/>
        <end position="122"/>
    </location>
</feature>